<sequence>MAQESADLASDCQSWLQKLSAWEQASSEETQKDTCLHLSGFQEFLRQMYEILKEMDSDAILERFPTIGQLLAKACWNPLILAYDESQKIVIWCLCCLMNKEPRTSAESGLNSWIRGLLSHVLSAFRFDMKEVCLFTKSLGYESIDYYPSLLKNMVLSLVSELRESHLNGLSTQSRMAPERMMSLSEVCVPLVTLPDMEPLVEALLTYHGHEPQEVLAPEFFEAVNEAFLSEKIVLPTSSVVSLWFRHLPSLEKATLHLFEKLFSSKIICLRRMECCIRESFLPQAACQPAIFRIVDEMFRFVLLETDGAPEVLAALQVFTSCLVEALKKENKQLTFALRTYFPYGAPCLAAALSQHPEAIPQGHRLQPLLHISQLLREAVEDCTRGSPRNPFESWFLFVHFGGWVDLAVAELLLREEAEPPAGLLWLLVFYYSPQDGSQQREQSMVELKVLINRLLMLLRSGPLSATDLQEAAESPSGDPRPPVCGQLVRRLLLSLLLWTPEGHAIVWEAVTHGPTFEITGPGCCPRIWRSTRPQHRPRAHLCCTEMAHTDAVIHEIIGFLDQTLYRSQHLCVEASRKLARDLLKELQAQV</sequence>
<gene>
    <name type="primary">Fancc</name>
    <name type="synonym">Fac</name>
    <name type="synonym">Facc</name>
</gene>
<comment type="function">
    <text evidence="1">DNA repair protein that may operate in a postreplication repair or a cell cycle checkpoint function. May be implicated in interstrand DNA cross-link repair and in the maintenance of normal chromosome stability. Upon IFNG induction, may facilitate STAT1 activation by recruiting STAT1 to IFNGR1 (By similarity).</text>
</comment>
<comment type="subunit">
    <text evidence="1">Belongs to the multisubunit FA complex composed of FANCA, FANCB, FANCC, FANCE, FANCF, FANCG, FANCL/PHF9 and FANCM. This complex may also include HSP70. Interacts with ZBTB32. Upon IFNG induction, interacts with STAT1. Interacts with CDK1. Interacts with EIF2AK2 (By similarity).</text>
</comment>
<comment type="subcellular location">
    <subcellularLocation>
        <location evidence="1">Nucleus</location>
    </subcellularLocation>
    <subcellularLocation>
        <location evidence="1">Cytoplasm</location>
    </subcellularLocation>
    <text>The major form is nuclear. The minor form is cytoplasmic.</text>
</comment>
<comment type="tissue specificity">
    <text>Ubiquitous.</text>
</comment>
<comment type="developmental stage">
    <text>Embryos from days 8-13 show a uniform pattern of expression with somewhat higher level expression in days 8 and 9 in the head mesenchyme as compared to the rest of the embryo. Higher levels of expression are seen in the developing bones of 14 to 16 day embryos. In the 15 day embryo it is detected in the perichondrium and the marrow of the iliac bone and perichondrium of the ribs and vertebrae. In the 16 day embryo it is detected in the perichondrial layer of the developing digits of the forelimb, outer root sheath of the hair follicles of the upper jaw and in the perichondrium of the vertebrae.</text>
</comment>
<comment type="sequence caution" evidence="2">
    <conflict type="frameshift">
        <sequence resource="EMBL-CDS" id="AAA37590"/>
    </conflict>
</comment>
<comment type="sequence caution" evidence="2">
    <conflict type="miscellaneous discrepancy">
        <sequence resource="EMBL-CDS" id="AAA37590"/>
    </conflict>
    <text>Aberrant splicing.</text>
</comment>
<keyword id="KW-0963">Cytoplasm</keyword>
<keyword id="KW-0227">DNA damage</keyword>
<keyword id="KW-0234">DNA repair</keyword>
<keyword id="KW-0539">Nucleus</keyword>
<keyword id="KW-1185">Reference proteome</keyword>
<accession>P50652</accession>
<accession>E9PXX6</accession>
<feature type="chain" id="PRO_0000087185" description="Fanconi anemia group C protein homolog">
    <location>
        <begin position="1"/>
        <end position="591"/>
    </location>
</feature>
<feature type="sequence conflict" description="In Ref. 1; AAA37590." evidence="2" ref="1">
    <original>L</original>
    <variation>V</variation>
    <location>
        <position position="235"/>
    </location>
</feature>
<feature type="sequence conflict" description="In Ref. 1; AAA37590." evidence="2" ref="1">
    <original>D</original>
    <variation>H</variation>
    <location>
        <position position="296"/>
    </location>
</feature>
<feature type="sequence conflict" description="In Ref. 1; AAA37590." evidence="2" ref="1">
    <original>E</original>
    <variation>K</variation>
    <location>
        <position position="305"/>
    </location>
</feature>
<feature type="sequence conflict" description="In Ref. 1; AAA37590." evidence="2" ref="1">
    <original>R</original>
    <variation>K</variation>
    <location>
        <position position="533"/>
    </location>
</feature>
<name>FANCC_MOUSE</name>
<dbReference type="EMBL" id="L08266">
    <property type="protein sequence ID" value="AAA37590.1"/>
    <property type="status" value="ALT_SEQ"/>
    <property type="molecule type" value="mRNA"/>
</dbReference>
<dbReference type="EMBL" id="AC130827">
    <property type="status" value="NOT_ANNOTATED_CDS"/>
    <property type="molecule type" value="Genomic_DNA"/>
</dbReference>
<dbReference type="EMBL" id="AC154638">
    <property type="status" value="NOT_ANNOTATED_CDS"/>
    <property type="molecule type" value="Genomic_DNA"/>
</dbReference>
<dbReference type="CCDS" id="CCDS84029.1"/>
<dbReference type="PIR" id="I49656">
    <property type="entry name" value="I49656"/>
</dbReference>
<dbReference type="RefSeq" id="NP_001334443.1">
    <property type="nucleotide sequence ID" value="NM_001347514.1"/>
</dbReference>
<dbReference type="RefSeq" id="XP_006517153.1">
    <property type="nucleotide sequence ID" value="XM_006517090.4"/>
</dbReference>
<dbReference type="RefSeq" id="XP_017170871.1">
    <property type="nucleotide sequence ID" value="XM_017315382.3"/>
</dbReference>
<dbReference type="RefSeq" id="XP_036013738.1">
    <property type="nucleotide sequence ID" value="XM_036157845.1"/>
</dbReference>
<dbReference type="SMR" id="P50652"/>
<dbReference type="BioGRID" id="199592">
    <property type="interactions" value="7"/>
</dbReference>
<dbReference type="FunCoup" id="P50652">
    <property type="interactions" value="1379"/>
</dbReference>
<dbReference type="IntAct" id="P50652">
    <property type="interactions" value="5"/>
</dbReference>
<dbReference type="MINT" id="P50652"/>
<dbReference type="STRING" id="10090.ENSMUSP00000124406"/>
<dbReference type="iPTMnet" id="P50652"/>
<dbReference type="PhosphoSitePlus" id="P50652"/>
<dbReference type="PaxDb" id="10090-ENSMUSP00000072788"/>
<dbReference type="ProteomicsDB" id="271552"/>
<dbReference type="Antibodypedia" id="4496">
    <property type="antibodies" value="436 antibodies from 36 providers"/>
</dbReference>
<dbReference type="Ensembl" id="ENSMUST00000163091.8">
    <property type="protein sequence ID" value="ENSMUSP00000124406.2"/>
    <property type="gene ID" value="ENSMUSG00000021461.18"/>
</dbReference>
<dbReference type="GeneID" id="14088"/>
<dbReference type="KEGG" id="mmu:14088"/>
<dbReference type="UCSC" id="uc007qxt.1">
    <property type="organism name" value="mouse"/>
</dbReference>
<dbReference type="AGR" id="MGI:95480"/>
<dbReference type="CTD" id="2176"/>
<dbReference type="MGI" id="MGI:95480">
    <property type="gene designation" value="Fancc"/>
</dbReference>
<dbReference type="VEuPathDB" id="HostDB:ENSMUSG00000021461"/>
<dbReference type="eggNOG" id="ENOG502QSB8">
    <property type="taxonomic scope" value="Eukaryota"/>
</dbReference>
<dbReference type="GeneTree" id="ENSGT00390000016390"/>
<dbReference type="HOGENOM" id="CLU_035819_0_0_1"/>
<dbReference type="InParanoid" id="P50652"/>
<dbReference type="OrthoDB" id="10046159at2759"/>
<dbReference type="Reactome" id="R-MMU-6783310">
    <property type="pathway name" value="Fanconi Anemia Pathway"/>
</dbReference>
<dbReference type="Reactome" id="R-MMU-9833482">
    <property type="pathway name" value="PKR-mediated signaling"/>
</dbReference>
<dbReference type="BioGRID-ORCS" id="14088">
    <property type="hits" value="34 hits in 114 CRISPR screens"/>
</dbReference>
<dbReference type="ChiTaRS" id="Fancc">
    <property type="organism name" value="mouse"/>
</dbReference>
<dbReference type="PRO" id="PR:P50652"/>
<dbReference type="Proteomes" id="UP000000589">
    <property type="component" value="Chromosome 13"/>
</dbReference>
<dbReference type="RNAct" id="P50652">
    <property type="molecule type" value="protein"/>
</dbReference>
<dbReference type="Bgee" id="ENSMUSG00000021461">
    <property type="expression patterns" value="Expressed in animal zygote and 232 other cell types or tissues"/>
</dbReference>
<dbReference type="ExpressionAtlas" id="P50652">
    <property type="expression patterns" value="baseline and differential"/>
</dbReference>
<dbReference type="GO" id="GO:0005737">
    <property type="term" value="C:cytoplasm"/>
    <property type="evidence" value="ECO:0007669"/>
    <property type="project" value="UniProtKB-SubCell"/>
</dbReference>
<dbReference type="GO" id="GO:0043240">
    <property type="term" value="C:Fanconi anaemia nuclear complex"/>
    <property type="evidence" value="ECO:0000250"/>
    <property type="project" value="UniProtKB"/>
</dbReference>
<dbReference type="GO" id="GO:0048854">
    <property type="term" value="P:brain morphogenesis"/>
    <property type="evidence" value="ECO:0000316"/>
    <property type="project" value="MGI"/>
</dbReference>
<dbReference type="GO" id="GO:0034599">
    <property type="term" value="P:cellular response to oxidative stress"/>
    <property type="evidence" value="ECO:0000316"/>
    <property type="project" value="MGI"/>
</dbReference>
<dbReference type="GO" id="GO:0007276">
    <property type="term" value="P:gamete generation"/>
    <property type="evidence" value="ECO:0000315"/>
    <property type="project" value="MGI"/>
</dbReference>
<dbReference type="GO" id="GO:0007281">
    <property type="term" value="P:germ cell development"/>
    <property type="evidence" value="ECO:0000315"/>
    <property type="project" value="MGI"/>
</dbReference>
<dbReference type="GO" id="GO:0036297">
    <property type="term" value="P:interstrand cross-link repair"/>
    <property type="evidence" value="ECO:0007669"/>
    <property type="project" value="InterPro"/>
</dbReference>
<dbReference type="GO" id="GO:0002262">
    <property type="term" value="P:myeloid cell homeostasis"/>
    <property type="evidence" value="ECO:0000315"/>
    <property type="project" value="MGI"/>
</dbReference>
<dbReference type="GO" id="GO:0097150">
    <property type="term" value="P:neuronal stem cell population maintenance"/>
    <property type="evidence" value="ECO:0000316"/>
    <property type="project" value="MGI"/>
</dbReference>
<dbReference type="GO" id="GO:0006289">
    <property type="term" value="P:nucleotide-excision repair"/>
    <property type="evidence" value="ECO:0000315"/>
    <property type="project" value="MGI"/>
</dbReference>
<dbReference type="GO" id="GO:0019430">
    <property type="term" value="P:removal of superoxide radicals"/>
    <property type="evidence" value="ECO:0000316"/>
    <property type="project" value="MGI"/>
</dbReference>
<dbReference type="InterPro" id="IPR000686">
    <property type="entry name" value="FANCC"/>
</dbReference>
<dbReference type="PANTHER" id="PTHR16798:SF0">
    <property type="entry name" value="FANCONI ANEMIA GROUP C PROTEIN"/>
    <property type="match status" value="1"/>
</dbReference>
<dbReference type="PANTHER" id="PTHR16798">
    <property type="entry name" value="FANCONI ANEMIA GROUP C PROTEIN FANCC"/>
    <property type="match status" value="1"/>
</dbReference>
<dbReference type="Pfam" id="PF02106">
    <property type="entry name" value="Fanconi_C"/>
    <property type="match status" value="1"/>
</dbReference>
<dbReference type="PIRSF" id="PIRSF018417">
    <property type="entry name" value="FACC_protein"/>
    <property type="match status" value="1"/>
</dbReference>
<dbReference type="PRINTS" id="PR00494">
    <property type="entry name" value="FANCONICGENE"/>
</dbReference>
<protein>
    <recommendedName>
        <fullName>Fanconi anemia group C protein homolog</fullName>
        <shortName>Protein FACC</shortName>
    </recommendedName>
</protein>
<proteinExistence type="evidence at transcript level"/>
<organism>
    <name type="scientific">Mus musculus</name>
    <name type="common">Mouse</name>
    <dbReference type="NCBI Taxonomy" id="10090"/>
    <lineage>
        <taxon>Eukaryota</taxon>
        <taxon>Metazoa</taxon>
        <taxon>Chordata</taxon>
        <taxon>Craniata</taxon>
        <taxon>Vertebrata</taxon>
        <taxon>Euteleostomi</taxon>
        <taxon>Mammalia</taxon>
        <taxon>Eutheria</taxon>
        <taxon>Euarchontoglires</taxon>
        <taxon>Glires</taxon>
        <taxon>Rodentia</taxon>
        <taxon>Myomorpha</taxon>
        <taxon>Muroidea</taxon>
        <taxon>Muridae</taxon>
        <taxon>Murinae</taxon>
        <taxon>Mus</taxon>
        <taxon>Mus</taxon>
    </lineage>
</organism>
<reference key="1">
    <citation type="journal article" date="1993" name="Hum. Mol. Genet.">
        <title>Cloning and analysis of the murine Fanconi anemia group C cDNA.</title>
        <authorList>
            <person name="Wevrick R."/>
            <person name="Clarke C.A."/>
            <person name="Buchwald M."/>
        </authorList>
    </citation>
    <scope>NUCLEOTIDE SEQUENCE [MRNA]</scope>
    <source>
        <strain>C57BL/6 X CBA</strain>
        <tissue>Liver</tissue>
    </source>
</reference>
<reference key="2">
    <citation type="journal article" date="2009" name="PLoS Biol.">
        <title>Lineage-specific biology revealed by a finished genome assembly of the mouse.</title>
        <authorList>
            <person name="Church D.M."/>
            <person name="Goodstadt L."/>
            <person name="Hillier L.W."/>
            <person name="Zody M.C."/>
            <person name="Goldstein S."/>
            <person name="She X."/>
            <person name="Bult C.J."/>
            <person name="Agarwala R."/>
            <person name="Cherry J.L."/>
            <person name="DiCuccio M."/>
            <person name="Hlavina W."/>
            <person name="Kapustin Y."/>
            <person name="Meric P."/>
            <person name="Maglott D."/>
            <person name="Birtle Z."/>
            <person name="Marques A.C."/>
            <person name="Graves T."/>
            <person name="Zhou S."/>
            <person name="Teague B."/>
            <person name="Potamousis K."/>
            <person name="Churas C."/>
            <person name="Place M."/>
            <person name="Herschleb J."/>
            <person name="Runnheim R."/>
            <person name="Forrest D."/>
            <person name="Amos-Landgraf J."/>
            <person name="Schwartz D.C."/>
            <person name="Cheng Z."/>
            <person name="Lindblad-Toh K."/>
            <person name="Eichler E.E."/>
            <person name="Ponting C.P."/>
        </authorList>
    </citation>
    <scope>NUCLEOTIDE SEQUENCE [LARGE SCALE GENOMIC DNA]</scope>
    <source>
        <strain>C57BL/6J</strain>
    </source>
</reference>
<evidence type="ECO:0000250" key="1"/>
<evidence type="ECO:0000305" key="2"/>